<organism>
    <name type="scientific">Lactobacillus acidophilus (strain ATCC 700396 / NCK56 / N2 / NCFM)</name>
    <dbReference type="NCBI Taxonomy" id="272621"/>
    <lineage>
        <taxon>Bacteria</taxon>
        <taxon>Bacillati</taxon>
        <taxon>Bacillota</taxon>
        <taxon>Bacilli</taxon>
        <taxon>Lactobacillales</taxon>
        <taxon>Lactobacillaceae</taxon>
        <taxon>Lactobacillus</taxon>
    </lineage>
</organism>
<reference key="1">
    <citation type="journal article" date="2005" name="Proc. Natl. Acad. Sci. U.S.A.">
        <title>Complete genome sequence of the probiotic lactic acid bacterium Lactobacillus acidophilus NCFM.</title>
        <authorList>
            <person name="Altermann E."/>
            <person name="Russell W.M."/>
            <person name="Azcarate-Peril M.A."/>
            <person name="Barrangou R."/>
            <person name="Buck B.L."/>
            <person name="McAuliffe O."/>
            <person name="Souther N."/>
            <person name="Dobson A."/>
            <person name="Duong T."/>
            <person name="Callanan M."/>
            <person name="Lick S."/>
            <person name="Hamrick A."/>
            <person name="Cano R."/>
            <person name="Klaenhammer T.R."/>
        </authorList>
    </citation>
    <scope>NUCLEOTIDE SEQUENCE [LARGE SCALE GENOMIC DNA]</scope>
    <source>
        <strain>ATCC 700396 / NCK56 / N2 / NCFM</strain>
    </source>
</reference>
<accession>Q5FN07</accession>
<gene>
    <name evidence="1" type="primary">rpsR</name>
    <name type="ordered locus">LBA0009</name>
</gene>
<feature type="chain" id="PRO_1000003513" description="Small ribosomal subunit protein bS18">
    <location>
        <begin position="1"/>
        <end position="78"/>
    </location>
</feature>
<sequence>MAQQRRGGRRRRKVDYIAANHIDYVDYKDVDLLKRFISERGKILPRRVTGTSAKNQRKVANAIKRARIMGLLPFVAED</sequence>
<dbReference type="EMBL" id="CP000033">
    <property type="protein sequence ID" value="AAV41917.1"/>
    <property type="molecule type" value="Genomic_DNA"/>
</dbReference>
<dbReference type="RefSeq" id="WP_003549366.1">
    <property type="nucleotide sequence ID" value="NC_006814.3"/>
</dbReference>
<dbReference type="RefSeq" id="YP_192948.1">
    <property type="nucleotide sequence ID" value="NC_006814.3"/>
</dbReference>
<dbReference type="SMR" id="Q5FN07"/>
<dbReference type="STRING" id="272621.LBA0009"/>
<dbReference type="GeneID" id="93290878"/>
<dbReference type="KEGG" id="lac:LBA0009"/>
<dbReference type="PATRIC" id="fig|272621.13.peg.9"/>
<dbReference type="eggNOG" id="COG0238">
    <property type="taxonomic scope" value="Bacteria"/>
</dbReference>
<dbReference type="HOGENOM" id="CLU_148710_2_2_9"/>
<dbReference type="OrthoDB" id="9812008at2"/>
<dbReference type="BioCyc" id="LACI272621:G1G49-9-MONOMER"/>
<dbReference type="PRO" id="PR:Q5FN07"/>
<dbReference type="Proteomes" id="UP000006381">
    <property type="component" value="Chromosome"/>
</dbReference>
<dbReference type="GO" id="GO:0022627">
    <property type="term" value="C:cytosolic small ribosomal subunit"/>
    <property type="evidence" value="ECO:0007669"/>
    <property type="project" value="TreeGrafter"/>
</dbReference>
<dbReference type="GO" id="GO:0070181">
    <property type="term" value="F:small ribosomal subunit rRNA binding"/>
    <property type="evidence" value="ECO:0007669"/>
    <property type="project" value="TreeGrafter"/>
</dbReference>
<dbReference type="GO" id="GO:0003735">
    <property type="term" value="F:structural constituent of ribosome"/>
    <property type="evidence" value="ECO:0007669"/>
    <property type="project" value="InterPro"/>
</dbReference>
<dbReference type="GO" id="GO:0006412">
    <property type="term" value="P:translation"/>
    <property type="evidence" value="ECO:0007669"/>
    <property type="project" value="UniProtKB-UniRule"/>
</dbReference>
<dbReference type="FunFam" id="4.10.640.10:FF:000003">
    <property type="entry name" value="30S ribosomal protein S18"/>
    <property type="match status" value="1"/>
</dbReference>
<dbReference type="Gene3D" id="4.10.640.10">
    <property type="entry name" value="Ribosomal protein S18"/>
    <property type="match status" value="1"/>
</dbReference>
<dbReference type="HAMAP" id="MF_00270">
    <property type="entry name" value="Ribosomal_bS18"/>
    <property type="match status" value="1"/>
</dbReference>
<dbReference type="InterPro" id="IPR001648">
    <property type="entry name" value="Ribosomal_bS18"/>
</dbReference>
<dbReference type="InterPro" id="IPR018275">
    <property type="entry name" value="Ribosomal_bS18_CS"/>
</dbReference>
<dbReference type="InterPro" id="IPR036870">
    <property type="entry name" value="Ribosomal_bS18_sf"/>
</dbReference>
<dbReference type="NCBIfam" id="TIGR00165">
    <property type="entry name" value="S18"/>
    <property type="match status" value="1"/>
</dbReference>
<dbReference type="PANTHER" id="PTHR13479">
    <property type="entry name" value="30S RIBOSOMAL PROTEIN S18"/>
    <property type="match status" value="1"/>
</dbReference>
<dbReference type="PANTHER" id="PTHR13479:SF40">
    <property type="entry name" value="SMALL RIBOSOMAL SUBUNIT PROTEIN BS18M"/>
    <property type="match status" value="1"/>
</dbReference>
<dbReference type="Pfam" id="PF01084">
    <property type="entry name" value="Ribosomal_S18"/>
    <property type="match status" value="1"/>
</dbReference>
<dbReference type="PRINTS" id="PR00974">
    <property type="entry name" value="RIBOSOMALS18"/>
</dbReference>
<dbReference type="SUPFAM" id="SSF46911">
    <property type="entry name" value="Ribosomal protein S18"/>
    <property type="match status" value="1"/>
</dbReference>
<dbReference type="PROSITE" id="PS00057">
    <property type="entry name" value="RIBOSOMAL_S18"/>
    <property type="match status" value="1"/>
</dbReference>
<comment type="function">
    <text evidence="1">Binds as a heterodimer with protein bS6 to the central domain of the 16S rRNA, where it helps stabilize the platform of the 30S subunit.</text>
</comment>
<comment type="subunit">
    <text evidence="1">Part of the 30S ribosomal subunit. Forms a tight heterodimer with protein bS6.</text>
</comment>
<comment type="similarity">
    <text evidence="1">Belongs to the bacterial ribosomal protein bS18 family.</text>
</comment>
<protein>
    <recommendedName>
        <fullName evidence="1">Small ribosomal subunit protein bS18</fullName>
    </recommendedName>
    <alternativeName>
        <fullName evidence="2">30S ribosomal protein S18</fullName>
    </alternativeName>
</protein>
<evidence type="ECO:0000255" key="1">
    <source>
        <dbReference type="HAMAP-Rule" id="MF_00270"/>
    </source>
</evidence>
<evidence type="ECO:0000305" key="2"/>
<keyword id="KW-1185">Reference proteome</keyword>
<keyword id="KW-0687">Ribonucleoprotein</keyword>
<keyword id="KW-0689">Ribosomal protein</keyword>
<keyword id="KW-0694">RNA-binding</keyword>
<keyword id="KW-0699">rRNA-binding</keyword>
<name>RS18_LACAC</name>
<proteinExistence type="inferred from homology"/>